<protein>
    <recommendedName>
        <fullName evidence="1">2,3,4,5-tetrahydropyridine-2,6-dicarboxylate N-succinyltransferase</fullName>
        <ecNumber evidence="1">2.3.1.117</ecNumber>
    </recommendedName>
    <alternativeName>
        <fullName evidence="1">Tetrahydrodipicolinate N-succinyltransferase</fullName>
        <shortName evidence="1">THP succinyltransferase</shortName>
        <shortName evidence="1">Tetrahydropicolinate succinylase</shortName>
    </alternativeName>
</protein>
<sequence length="274" mass="29878">MQQLQNIIETAFERRAEITPANADTVTREAVNQVIALLDSGALRVAEKIDGQWVTHQWLKKAVLLSFRINDNQVIEGAESRYFDKVPMKFADYDEARFQKEGFRVVPPAAVRQGAFIARNTVLMPSYVNIGAYVDEGTMVDTWATVGSCAQIGKNVHLSGGVGIGGVLEPLQANPTIIEDNCFIGARSEVVEGVIVEEGSVISMGVYIGQSTRIYDRETGDIHYGRVPAGSVVVSGNLPSKDGKYSLYCAVIVKKVDAKTRGKVGINELLRTID</sequence>
<accession>B5Z0E4</accession>
<gene>
    <name evidence="1" type="primary">dapD</name>
    <name type="ordered locus">ECH74115_0174</name>
</gene>
<name>DAPD_ECO5E</name>
<comment type="catalytic activity">
    <reaction evidence="1">
        <text>(S)-2,3,4,5-tetrahydrodipicolinate + succinyl-CoA + H2O = (S)-2-succinylamino-6-oxoheptanedioate + CoA</text>
        <dbReference type="Rhea" id="RHEA:17325"/>
        <dbReference type="ChEBI" id="CHEBI:15377"/>
        <dbReference type="ChEBI" id="CHEBI:15685"/>
        <dbReference type="ChEBI" id="CHEBI:16845"/>
        <dbReference type="ChEBI" id="CHEBI:57287"/>
        <dbReference type="ChEBI" id="CHEBI:57292"/>
        <dbReference type="EC" id="2.3.1.117"/>
    </reaction>
</comment>
<comment type="pathway">
    <text evidence="1">Amino-acid biosynthesis; L-lysine biosynthesis via DAP pathway; LL-2,6-diaminopimelate from (S)-tetrahydrodipicolinate (succinylase route): step 1/3.</text>
</comment>
<comment type="subcellular location">
    <subcellularLocation>
        <location evidence="1">Cytoplasm</location>
    </subcellularLocation>
</comment>
<comment type="similarity">
    <text evidence="1">Belongs to the transferase hexapeptide repeat family.</text>
</comment>
<feature type="chain" id="PRO_1000134042" description="2,3,4,5-tetrahydropyridine-2,6-dicarboxylate N-succinyltransferase">
    <location>
        <begin position="1"/>
        <end position="274"/>
    </location>
</feature>
<reference key="1">
    <citation type="journal article" date="2011" name="Proc. Natl. Acad. Sci. U.S.A.">
        <title>Genomic anatomy of Escherichia coli O157:H7 outbreaks.</title>
        <authorList>
            <person name="Eppinger M."/>
            <person name="Mammel M.K."/>
            <person name="Leclerc J.E."/>
            <person name="Ravel J."/>
            <person name="Cebula T.A."/>
        </authorList>
    </citation>
    <scope>NUCLEOTIDE SEQUENCE [LARGE SCALE GENOMIC DNA]</scope>
    <source>
        <strain>EC4115 / EHEC</strain>
    </source>
</reference>
<dbReference type="EC" id="2.3.1.117" evidence="1"/>
<dbReference type="EMBL" id="CP001164">
    <property type="protein sequence ID" value="ACI39033.1"/>
    <property type="molecule type" value="Genomic_DNA"/>
</dbReference>
<dbReference type="RefSeq" id="WP_001186649.1">
    <property type="nucleotide sequence ID" value="NC_011353.1"/>
</dbReference>
<dbReference type="SMR" id="B5Z0E4"/>
<dbReference type="KEGG" id="ecf:ECH74115_0174"/>
<dbReference type="HOGENOM" id="CLU_050859_0_1_6"/>
<dbReference type="UniPathway" id="UPA00034">
    <property type="reaction ID" value="UER00019"/>
</dbReference>
<dbReference type="GO" id="GO:0005737">
    <property type="term" value="C:cytoplasm"/>
    <property type="evidence" value="ECO:0007669"/>
    <property type="project" value="UniProtKB-SubCell"/>
</dbReference>
<dbReference type="GO" id="GO:0008666">
    <property type="term" value="F:2,3,4,5-tetrahydropyridine-2,6-dicarboxylate N-succinyltransferase activity"/>
    <property type="evidence" value="ECO:0007669"/>
    <property type="project" value="UniProtKB-UniRule"/>
</dbReference>
<dbReference type="GO" id="GO:0016779">
    <property type="term" value="F:nucleotidyltransferase activity"/>
    <property type="evidence" value="ECO:0007669"/>
    <property type="project" value="TreeGrafter"/>
</dbReference>
<dbReference type="GO" id="GO:0019877">
    <property type="term" value="P:diaminopimelate biosynthetic process"/>
    <property type="evidence" value="ECO:0007669"/>
    <property type="project" value="UniProtKB-UniRule"/>
</dbReference>
<dbReference type="GO" id="GO:0009089">
    <property type="term" value="P:lysine biosynthetic process via diaminopimelate"/>
    <property type="evidence" value="ECO:0007669"/>
    <property type="project" value="UniProtKB-UniRule"/>
</dbReference>
<dbReference type="CDD" id="cd03350">
    <property type="entry name" value="LbH_THP_succinylT"/>
    <property type="match status" value="1"/>
</dbReference>
<dbReference type="FunFam" id="1.10.166.10:FF:000001">
    <property type="entry name" value="2,3,4,5-tetrahydropyridine-2,6-dicarboxylate N-succinyltransferase"/>
    <property type="match status" value="1"/>
</dbReference>
<dbReference type="FunFam" id="2.160.10.10:FF:000004">
    <property type="entry name" value="2,3,4,5-tetrahydropyridine-2,6-dicarboxylate N-succinyltransferase"/>
    <property type="match status" value="1"/>
</dbReference>
<dbReference type="Gene3D" id="2.160.10.10">
    <property type="entry name" value="Hexapeptide repeat proteins"/>
    <property type="match status" value="1"/>
</dbReference>
<dbReference type="Gene3D" id="1.10.166.10">
    <property type="entry name" value="Tetrahydrodipicolinate-N-succinyltransferase, N-terminal domain"/>
    <property type="match status" value="1"/>
</dbReference>
<dbReference type="HAMAP" id="MF_00811">
    <property type="entry name" value="DapD"/>
    <property type="match status" value="1"/>
</dbReference>
<dbReference type="InterPro" id="IPR005664">
    <property type="entry name" value="DapD_Trfase_Hexpep_rpt_fam"/>
</dbReference>
<dbReference type="InterPro" id="IPR001451">
    <property type="entry name" value="Hexapep"/>
</dbReference>
<dbReference type="InterPro" id="IPR018357">
    <property type="entry name" value="Hexapep_transf_CS"/>
</dbReference>
<dbReference type="InterPro" id="IPR023180">
    <property type="entry name" value="THP_succinylTrfase_dom1"/>
</dbReference>
<dbReference type="InterPro" id="IPR037133">
    <property type="entry name" value="THP_succinylTrfase_N_sf"/>
</dbReference>
<dbReference type="InterPro" id="IPR011004">
    <property type="entry name" value="Trimer_LpxA-like_sf"/>
</dbReference>
<dbReference type="NCBIfam" id="TIGR00965">
    <property type="entry name" value="dapD"/>
    <property type="match status" value="1"/>
</dbReference>
<dbReference type="NCBIfam" id="NF008808">
    <property type="entry name" value="PRK11830.1"/>
    <property type="match status" value="1"/>
</dbReference>
<dbReference type="PANTHER" id="PTHR19136:SF52">
    <property type="entry name" value="2,3,4,5-TETRAHYDROPYRIDINE-2,6-DICARBOXYLATE N-SUCCINYLTRANSFERASE"/>
    <property type="match status" value="1"/>
</dbReference>
<dbReference type="PANTHER" id="PTHR19136">
    <property type="entry name" value="MOLYBDENUM COFACTOR GUANYLYLTRANSFERASE"/>
    <property type="match status" value="1"/>
</dbReference>
<dbReference type="Pfam" id="PF14602">
    <property type="entry name" value="Hexapep_2"/>
    <property type="match status" value="1"/>
</dbReference>
<dbReference type="Pfam" id="PF14805">
    <property type="entry name" value="THDPS_N_2"/>
    <property type="match status" value="1"/>
</dbReference>
<dbReference type="SUPFAM" id="SSF51161">
    <property type="entry name" value="Trimeric LpxA-like enzymes"/>
    <property type="match status" value="1"/>
</dbReference>
<dbReference type="PROSITE" id="PS00101">
    <property type="entry name" value="HEXAPEP_TRANSFERASES"/>
    <property type="match status" value="1"/>
</dbReference>
<evidence type="ECO:0000255" key="1">
    <source>
        <dbReference type="HAMAP-Rule" id="MF_00811"/>
    </source>
</evidence>
<organism>
    <name type="scientific">Escherichia coli O157:H7 (strain EC4115 / EHEC)</name>
    <dbReference type="NCBI Taxonomy" id="444450"/>
    <lineage>
        <taxon>Bacteria</taxon>
        <taxon>Pseudomonadati</taxon>
        <taxon>Pseudomonadota</taxon>
        <taxon>Gammaproteobacteria</taxon>
        <taxon>Enterobacterales</taxon>
        <taxon>Enterobacteriaceae</taxon>
        <taxon>Escherichia</taxon>
    </lineage>
</organism>
<keyword id="KW-0012">Acyltransferase</keyword>
<keyword id="KW-0028">Amino-acid biosynthesis</keyword>
<keyword id="KW-0963">Cytoplasm</keyword>
<keyword id="KW-0220">Diaminopimelate biosynthesis</keyword>
<keyword id="KW-0457">Lysine biosynthesis</keyword>
<keyword id="KW-0677">Repeat</keyword>
<keyword id="KW-0808">Transferase</keyword>
<proteinExistence type="inferred from homology"/>